<keyword id="KW-0963">Cytoplasm</keyword>
<keyword id="KW-0238">DNA-binding</keyword>
<keyword id="KW-0677">Repeat</keyword>
<keyword id="KW-0678">Repressor</keyword>
<keyword id="KW-0804">Transcription</keyword>
<keyword id="KW-0805">Transcription regulation</keyword>
<evidence type="ECO:0000255" key="1">
    <source>
        <dbReference type="HAMAP-Rule" id="MF_01008"/>
    </source>
</evidence>
<evidence type="ECO:0000255" key="2">
    <source>
        <dbReference type="PROSITE-ProRule" id="PRU01076"/>
    </source>
</evidence>
<accession>Q1CMN6</accession>
<accession>C4GNW8</accession>
<name>MRAZ_YERPN</name>
<proteinExistence type="inferred from homology"/>
<organism>
    <name type="scientific">Yersinia pestis bv. Antiqua (strain Nepal516)</name>
    <dbReference type="NCBI Taxonomy" id="377628"/>
    <lineage>
        <taxon>Bacteria</taxon>
        <taxon>Pseudomonadati</taxon>
        <taxon>Pseudomonadota</taxon>
        <taxon>Gammaproteobacteria</taxon>
        <taxon>Enterobacterales</taxon>
        <taxon>Yersiniaceae</taxon>
        <taxon>Yersinia</taxon>
    </lineage>
</organism>
<protein>
    <recommendedName>
        <fullName>Transcriptional regulator MraZ</fullName>
    </recommendedName>
</protein>
<reference key="1">
    <citation type="journal article" date="2006" name="J. Bacteriol.">
        <title>Complete genome sequence of Yersinia pestis strains Antiqua and Nepal516: evidence of gene reduction in an emerging pathogen.</title>
        <authorList>
            <person name="Chain P.S.G."/>
            <person name="Hu P."/>
            <person name="Malfatti S.A."/>
            <person name="Radnedge L."/>
            <person name="Larimer F."/>
            <person name="Vergez L.M."/>
            <person name="Worsham P."/>
            <person name="Chu M.C."/>
            <person name="Andersen G.L."/>
        </authorList>
    </citation>
    <scope>NUCLEOTIDE SEQUENCE [LARGE SCALE GENOMIC DNA]</scope>
    <source>
        <strain>Nepal516</strain>
    </source>
</reference>
<reference key="2">
    <citation type="submission" date="2009-04" db="EMBL/GenBank/DDBJ databases">
        <title>Yersinia pestis Nepal516A whole genome shotgun sequencing project.</title>
        <authorList>
            <person name="Plunkett G. III"/>
            <person name="Anderson B.D."/>
            <person name="Baumler D.J."/>
            <person name="Burland V."/>
            <person name="Cabot E.L."/>
            <person name="Glasner J.D."/>
            <person name="Mau B."/>
            <person name="Neeno-Eckwall E."/>
            <person name="Perna N.T."/>
            <person name="Munk A.C."/>
            <person name="Tapia R."/>
            <person name="Green L.D."/>
            <person name="Rogers Y.C."/>
            <person name="Detter J.C."/>
            <person name="Bruce D.C."/>
            <person name="Brettin T.S."/>
        </authorList>
    </citation>
    <scope>NUCLEOTIDE SEQUENCE [LARGE SCALE GENOMIC DNA]</scope>
    <source>
        <strain>Nepal516</strain>
    </source>
</reference>
<gene>
    <name evidence="1" type="primary">mraZ</name>
    <name type="ordered locus">YPN_0412</name>
    <name type="ORF">YP516_0426</name>
</gene>
<sequence>MFRGATMVNLDSKGRLAVPTRYRESLNEESQGQMVCTIDLHQPCLLLYPLPEWEIIEQKLSRLSSMNPAERRVQRLLLGHASECQMDGAGRLLIAGTLRQHAGLNKEVMLVGQFNKFELWDEQTWYQQVKDDIDAEQSTQEPLSERLQGLSL</sequence>
<comment type="function">
    <text evidence="1">Negatively regulates its own expression and that of the subsequent genes in the proximal part of the division and cell wall (dcw) gene cluster. Acts by binding directly to DNA. May also regulate the expression of genes outside the dcw cluster.</text>
</comment>
<comment type="subunit">
    <text evidence="1">Forms oligomers.</text>
</comment>
<comment type="subcellular location">
    <subcellularLocation>
        <location evidence="1">Cytoplasm</location>
        <location evidence="1">Nucleoid</location>
    </subcellularLocation>
</comment>
<comment type="similarity">
    <text evidence="1">Belongs to the MraZ family.</text>
</comment>
<dbReference type="EMBL" id="CP000305">
    <property type="protein sequence ID" value="ABG16744.1"/>
    <property type="molecule type" value="Genomic_DNA"/>
</dbReference>
<dbReference type="EMBL" id="ACNQ01000006">
    <property type="protein sequence ID" value="EEO78200.1"/>
    <property type="molecule type" value="Genomic_DNA"/>
</dbReference>
<dbReference type="RefSeq" id="WP_002210443.1">
    <property type="nucleotide sequence ID" value="NZ_ACNQ01000006.1"/>
</dbReference>
<dbReference type="SMR" id="Q1CMN6"/>
<dbReference type="GeneID" id="57974069"/>
<dbReference type="KEGG" id="ypn:YPN_0412"/>
<dbReference type="HOGENOM" id="CLU_107907_2_0_6"/>
<dbReference type="Proteomes" id="UP000008936">
    <property type="component" value="Chromosome"/>
</dbReference>
<dbReference type="GO" id="GO:0005737">
    <property type="term" value="C:cytoplasm"/>
    <property type="evidence" value="ECO:0007669"/>
    <property type="project" value="UniProtKB-UniRule"/>
</dbReference>
<dbReference type="GO" id="GO:0009295">
    <property type="term" value="C:nucleoid"/>
    <property type="evidence" value="ECO:0007669"/>
    <property type="project" value="UniProtKB-SubCell"/>
</dbReference>
<dbReference type="GO" id="GO:0003700">
    <property type="term" value="F:DNA-binding transcription factor activity"/>
    <property type="evidence" value="ECO:0007669"/>
    <property type="project" value="UniProtKB-UniRule"/>
</dbReference>
<dbReference type="GO" id="GO:0000976">
    <property type="term" value="F:transcription cis-regulatory region binding"/>
    <property type="evidence" value="ECO:0007669"/>
    <property type="project" value="TreeGrafter"/>
</dbReference>
<dbReference type="GO" id="GO:2000143">
    <property type="term" value="P:negative regulation of DNA-templated transcription initiation"/>
    <property type="evidence" value="ECO:0007669"/>
    <property type="project" value="TreeGrafter"/>
</dbReference>
<dbReference type="CDD" id="cd16321">
    <property type="entry name" value="MraZ_C"/>
    <property type="match status" value="1"/>
</dbReference>
<dbReference type="CDD" id="cd16320">
    <property type="entry name" value="MraZ_N"/>
    <property type="match status" value="1"/>
</dbReference>
<dbReference type="FunFam" id="3.40.1550.20:FF:000001">
    <property type="entry name" value="Transcriptional regulator MraZ"/>
    <property type="match status" value="1"/>
</dbReference>
<dbReference type="Gene3D" id="3.40.1550.20">
    <property type="entry name" value="Transcriptional regulator MraZ domain"/>
    <property type="match status" value="1"/>
</dbReference>
<dbReference type="HAMAP" id="MF_01008">
    <property type="entry name" value="MraZ"/>
    <property type="match status" value="1"/>
</dbReference>
<dbReference type="InterPro" id="IPR003444">
    <property type="entry name" value="MraZ"/>
</dbReference>
<dbReference type="InterPro" id="IPR035644">
    <property type="entry name" value="MraZ_C"/>
</dbReference>
<dbReference type="InterPro" id="IPR020603">
    <property type="entry name" value="MraZ_dom"/>
</dbReference>
<dbReference type="InterPro" id="IPR035642">
    <property type="entry name" value="MraZ_N"/>
</dbReference>
<dbReference type="InterPro" id="IPR038619">
    <property type="entry name" value="MraZ_sf"/>
</dbReference>
<dbReference type="InterPro" id="IPR007159">
    <property type="entry name" value="SpoVT-AbrB_dom"/>
</dbReference>
<dbReference type="InterPro" id="IPR037914">
    <property type="entry name" value="SpoVT-AbrB_sf"/>
</dbReference>
<dbReference type="NCBIfam" id="TIGR00242">
    <property type="entry name" value="division/cell wall cluster transcriptional repressor MraZ"/>
    <property type="match status" value="1"/>
</dbReference>
<dbReference type="PANTHER" id="PTHR34701">
    <property type="entry name" value="TRANSCRIPTIONAL REGULATOR MRAZ"/>
    <property type="match status" value="1"/>
</dbReference>
<dbReference type="PANTHER" id="PTHR34701:SF1">
    <property type="entry name" value="TRANSCRIPTIONAL REGULATOR MRAZ"/>
    <property type="match status" value="1"/>
</dbReference>
<dbReference type="Pfam" id="PF02381">
    <property type="entry name" value="MraZ"/>
    <property type="match status" value="2"/>
</dbReference>
<dbReference type="SUPFAM" id="SSF89447">
    <property type="entry name" value="AbrB/MazE/MraZ-like"/>
    <property type="match status" value="1"/>
</dbReference>
<dbReference type="PROSITE" id="PS51740">
    <property type="entry name" value="SPOVT_ABRB"/>
    <property type="match status" value="2"/>
</dbReference>
<feature type="chain" id="PRO_1000062951" description="Transcriptional regulator MraZ">
    <location>
        <begin position="1"/>
        <end position="152"/>
    </location>
</feature>
<feature type="domain" description="SpoVT-AbrB 1" evidence="2">
    <location>
        <begin position="5"/>
        <end position="52"/>
    </location>
</feature>
<feature type="domain" description="SpoVT-AbrB 2" evidence="2">
    <location>
        <begin position="81"/>
        <end position="124"/>
    </location>
</feature>